<proteinExistence type="inferred from homology"/>
<dbReference type="EC" id="2.7.7.8" evidence="1"/>
<dbReference type="EMBL" id="CP000393">
    <property type="protein sequence ID" value="ABG50822.1"/>
    <property type="molecule type" value="Genomic_DNA"/>
</dbReference>
<dbReference type="RefSeq" id="WP_011611198.1">
    <property type="nucleotide sequence ID" value="NC_008312.1"/>
</dbReference>
<dbReference type="SMR" id="Q115K2"/>
<dbReference type="STRING" id="203124.Tery_1541"/>
<dbReference type="KEGG" id="ter:Tery_1541"/>
<dbReference type="eggNOG" id="COG1185">
    <property type="taxonomic scope" value="Bacteria"/>
</dbReference>
<dbReference type="HOGENOM" id="CLU_004217_2_2_3"/>
<dbReference type="OrthoDB" id="9804305at2"/>
<dbReference type="GO" id="GO:0005829">
    <property type="term" value="C:cytosol"/>
    <property type="evidence" value="ECO:0007669"/>
    <property type="project" value="TreeGrafter"/>
</dbReference>
<dbReference type="GO" id="GO:0000175">
    <property type="term" value="F:3'-5'-RNA exonuclease activity"/>
    <property type="evidence" value="ECO:0007669"/>
    <property type="project" value="TreeGrafter"/>
</dbReference>
<dbReference type="GO" id="GO:0000287">
    <property type="term" value="F:magnesium ion binding"/>
    <property type="evidence" value="ECO:0007669"/>
    <property type="project" value="UniProtKB-UniRule"/>
</dbReference>
<dbReference type="GO" id="GO:0004654">
    <property type="term" value="F:polyribonucleotide nucleotidyltransferase activity"/>
    <property type="evidence" value="ECO:0007669"/>
    <property type="project" value="UniProtKB-UniRule"/>
</dbReference>
<dbReference type="GO" id="GO:0003723">
    <property type="term" value="F:RNA binding"/>
    <property type="evidence" value="ECO:0007669"/>
    <property type="project" value="UniProtKB-UniRule"/>
</dbReference>
<dbReference type="GO" id="GO:0006402">
    <property type="term" value="P:mRNA catabolic process"/>
    <property type="evidence" value="ECO:0007669"/>
    <property type="project" value="UniProtKB-UniRule"/>
</dbReference>
<dbReference type="GO" id="GO:0006396">
    <property type="term" value="P:RNA processing"/>
    <property type="evidence" value="ECO:0007669"/>
    <property type="project" value="InterPro"/>
</dbReference>
<dbReference type="CDD" id="cd02393">
    <property type="entry name" value="KH-I_PNPase"/>
    <property type="match status" value="1"/>
</dbReference>
<dbReference type="CDD" id="cd11363">
    <property type="entry name" value="RNase_PH_PNPase_1"/>
    <property type="match status" value="1"/>
</dbReference>
<dbReference type="CDD" id="cd11364">
    <property type="entry name" value="RNase_PH_PNPase_2"/>
    <property type="match status" value="1"/>
</dbReference>
<dbReference type="CDD" id="cd04472">
    <property type="entry name" value="S1_PNPase"/>
    <property type="match status" value="1"/>
</dbReference>
<dbReference type="FunFam" id="3.30.1370.10:FF:000001">
    <property type="entry name" value="Polyribonucleotide nucleotidyltransferase"/>
    <property type="match status" value="1"/>
</dbReference>
<dbReference type="FunFam" id="3.30.230.70:FF:000001">
    <property type="entry name" value="Polyribonucleotide nucleotidyltransferase"/>
    <property type="match status" value="1"/>
</dbReference>
<dbReference type="FunFam" id="3.30.230.70:FF:000002">
    <property type="entry name" value="Polyribonucleotide nucleotidyltransferase"/>
    <property type="match status" value="1"/>
</dbReference>
<dbReference type="Gene3D" id="3.30.230.70">
    <property type="entry name" value="GHMP Kinase, N-terminal domain"/>
    <property type="match status" value="2"/>
</dbReference>
<dbReference type="Gene3D" id="3.30.1370.10">
    <property type="entry name" value="K Homology domain, type 1"/>
    <property type="match status" value="1"/>
</dbReference>
<dbReference type="Gene3D" id="2.40.50.140">
    <property type="entry name" value="Nucleic acid-binding proteins"/>
    <property type="match status" value="1"/>
</dbReference>
<dbReference type="HAMAP" id="MF_01595">
    <property type="entry name" value="PNPase"/>
    <property type="match status" value="1"/>
</dbReference>
<dbReference type="InterPro" id="IPR001247">
    <property type="entry name" value="ExoRNase_PH_dom1"/>
</dbReference>
<dbReference type="InterPro" id="IPR015847">
    <property type="entry name" value="ExoRNase_PH_dom2"/>
</dbReference>
<dbReference type="InterPro" id="IPR036345">
    <property type="entry name" value="ExoRNase_PH_dom2_sf"/>
</dbReference>
<dbReference type="InterPro" id="IPR004087">
    <property type="entry name" value="KH_dom"/>
</dbReference>
<dbReference type="InterPro" id="IPR004088">
    <property type="entry name" value="KH_dom_type_1"/>
</dbReference>
<dbReference type="InterPro" id="IPR036612">
    <property type="entry name" value="KH_dom_type_1_sf"/>
</dbReference>
<dbReference type="InterPro" id="IPR012340">
    <property type="entry name" value="NA-bd_OB-fold"/>
</dbReference>
<dbReference type="InterPro" id="IPR012162">
    <property type="entry name" value="PNPase"/>
</dbReference>
<dbReference type="InterPro" id="IPR027408">
    <property type="entry name" value="PNPase/RNase_PH_dom_sf"/>
</dbReference>
<dbReference type="InterPro" id="IPR015848">
    <property type="entry name" value="PNPase_PH_RNA-bd_bac/org-type"/>
</dbReference>
<dbReference type="InterPro" id="IPR036456">
    <property type="entry name" value="PNPase_PH_RNA-bd_sf"/>
</dbReference>
<dbReference type="InterPro" id="IPR020568">
    <property type="entry name" value="Ribosomal_Su5_D2-typ_SF"/>
</dbReference>
<dbReference type="InterPro" id="IPR003029">
    <property type="entry name" value="S1_domain"/>
</dbReference>
<dbReference type="NCBIfam" id="TIGR03591">
    <property type="entry name" value="polynuc_phos"/>
    <property type="match status" value="1"/>
</dbReference>
<dbReference type="NCBIfam" id="NF008805">
    <property type="entry name" value="PRK11824.1"/>
    <property type="match status" value="1"/>
</dbReference>
<dbReference type="PANTHER" id="PTHR11252">
    <property type="entry name" value="POLYRIBONUCLEOTIDE NUCLEOTIDYLTRANSFERASE"/>
    <property type="match status" value="1"/>
</dbReference>
<dbReference type="PANTHER" id="PTHR11252:SF0">
    <property type="entry name" value="POLYRIBONUCLEOTIDE NUCLEOTIDYLTRANSFERASE 1, MITOCHONDRIAL"/>
    <property type="match status" value="1"/>
</dbReference>
<dbReference type="Pfam" id="PF00013">
    <property type="entry name" value="KH_1"/>
    <property type="match status" value="1"/>
</dbReference>
<dbReference type="Pfam" id="PF03726">
    <property type="entry name" value="PNPase"/>
    <property type="match status" value="1"/>
</dbReference>
<dbReference type="Pfam" id="PF01138">
    <property type="entry name" value="RNase_PH"/>
    <property type="match status" value="2"/>
</dbReference>
<dbReference type="Pfam" id="PF03725">
    <property type="entry name" value="RNase_PH_C"/>
    <property type="match status" value="1"/>
</dbReference>
<dbReference type="Pfam" id="PF00575">
    <property type="entry name" value="S1"/>
    <property type="match status" value="1"/>
</dbReference>
<dbReference type="PIRSF" id="PIRSF005499">
    <property type="entry name" value="PNPase"/>
    <property type="match status" value="1"/>
</dbReference>
<dbReference type="SMART" id="SM00322">
    <property type="entry name" value="KH"/>
    <property type="match status" value="1"/>
</dbReference>
<dbReference type="SMART" id="SM00316">
    <property type="entry name" value="S1"/>
    <property type="match status" value="1"/>
</dbReference>
<dbReference type="SUPFAM" id="SSF54791">
    <property type="entry name" value="Eukaryotic type KH-domain (KH-domain type I)"/>
    <property type="match status" value="1"/>
</dbReference>
<dbReference type="SUPFAM" id="SSF50249">
    <property type="entry name" value="Nucleic acid-binding proteins"/>
    <property type="match status" value="1"/>
</dbReference>
<dbReference type="SUPFAM" id="SSF46915">
    <property type="entry name" value="Polynucleotide phosphorylase/guanosine pentaphosphate synthase (PNPase/GPSI), domain 3"/>
    <property type="match status" value="1"/>
</dbReference>
<dbReference type="SUPFAM" id="SSF55666">
    <property type="entry name" value="Ribonuclease PH domain 2-like"/>
    <property type="match status" value="2"/>
</dbReference>
<dbReference type="SUPFAM" id="SSF54211">
    <property type="entry name" value="Ribosomal protein S5 domain 2-like"/>
    <property type="match status" value="2"/>
</dbReference>
<dbReference type="PROSITE" id="PS50084">
    <property type="entry name" value="KH_TYPE_1"/>
    <property type="match status" value="1"/>
</dbReference>
<dbReference type="PROSITE" id="PS50126">
    <property type="entry name" value="S1"/>
    <property type="match status" value="1"/>
</dbReference>
<protein>
    <recommendedName>
        <fullName evidence="1">Polyribonucleotide nucleotidyltransferase</fullName>
        <ecNumber evidence="1">2.7.7.8</ecNumber>
    </recommendedName>
    <alternativeName>
        <fullName evidence="1">Polynucleotide phosphorylase</fullName>
        <shortName evidence="1">PNPase</shortName>
    </alternativeName>
</protein>
<feature type="chain" id="PRO_0000329922" description="Polyribonucleotide nucleotidyltransferase">
    <location>
        <begin position="1"/>
        <end position="717"/>
    </location>
</feature>
<feature type="domain" description="KH" evidence="1">
    <location>
        <begin position="563"/>
        <end position="622"/>
    </location>
</feature>
<feature type="domain" description="S1 motif" evidence="1">
    <location>
        <begin position="632"/>
        <end position="700"/>
    </location>
</feature>
<feature type="binding site" evidence="1">
    <location>
        <position position="496"/>
    </location>
    <ligand>
        <name>Mg(2+)</name>
        <dbReference type="ChEBI" id="CHEBI:18420"/>
    </ligand>
</feature>
<feature type="binding site" evidence="1">
    <location>
        <position position="502"/>
    </location>
    <ligand>
        <name>Mg(2+)</name>
        <dbReference type="ChEBI" id="CHEBI:18420"/>
    </ligand>
</feature>
<name>PNP_TRIEI</name>
<keyword id="KW-0963">Cytoplasm</keyword>
<keyword id="KW-0460">Magnesium</keyword>
<keyword id="KW-0479">Metal-binding</keyword>
<keyword id="KW-0548">Nucleotidyltransferase</keyword>
<keyword id="KW-0694">RNA-binding</keyword>
<keyword id="KW-0808">Transferase</keyword>
<reference key="1">
    <citation type="journal article" date="2015" name="Proc. Natl. Acad. Sci. U.S.A.">
        <title>Trichodesmium genome maintains abundant, widespread noncoding DNA in situ, despite oligotrophic lifestyle.</title>
        <authorList>
            <person name="Walworth N."/>
            <person name="Pfreundt U."/>
            <person name="Nelson W.C."/>
            <person name="Mincer T."/>
            <person name="Heidelberg J.F."/>
            <person name="Fu F."/>
            <person name="Waterbury J.B."/>
            <person name="Glavina del Rio T."/>
            <person name="Goodwin L."/>
            <person name="Kyrpides N.C."/>
            <person name="Land M.L."/>
            <person name="Woyke T."/>
            <person name="Hutchins D.A."/>
            <person name="Hess W.R."/>
            <person name="Webb E.A."/>
        </authorList>
    </citation>
    <scope>NUCLEOTIDE SEQUENCE [LARGE SCALE GENOMIC DNA]</scope>
    <source>
        <strain>IMS101</strain>
    </source>
</reference>
<evidence type="ECO:0000255" key="1">
    <source>
        <dbReference type="HAMAP-Rule" id="MF_01595"/>
    </source>
</evidence>
<sequence length="717" mass="77947">MEEIDKSISFDGRDIRLKVGLFAPQAGGAVMIESGDTAVLVTATTAKGREGIDFLPLLVDYEERLYAGGKIPGGFLRREGRPPEKVTLTSRLIDRPLRPLFPSWLRDDIQIVATTLSMDEEVPPDVLAVTGSSVAVLLAKLPFYGPMAAVRVGLVGDDFIINPTYREVKNGDLDLVVAGSPQGVIMVEAGANQLPEQDIIEAIDFGYEAVCDLIQAQREIIAEMGIELVELEPPEVDPTLENYIKEKATEQIKEILSQYDLDKNQRDEKLDEIKDSLAESITELPEEEAVRAMVESESMLLGNAFKSVTKKLMRQQIVAEGIRVDGRKLDEVRPVSCRVGVLPSRVHGSSLFNRGLTQVMSAVTLGTPGDAQELADDLHPQDEKRYLHHYNFPPFSVGETKPLRQPGRREIGHGALAERALIPVIPKSDIFPYVIRVVSEVLSSNGSTSMGSVCASTLGLMDAGVPIVKPVSGAAMGLIKEDEEVRILTDIQGIEDFLGDMDFKVAGTDSGITALQMDMKITGLPIEVIADAIHQAKPARIHILDKMLSVLDLPRPDMSPYAPRLLSFKIDPEMIGLVIGPGGKTIKGITEETGVKIDIDDDGTVTIAAADGEKAKQACNIIQGMTKKLNPGDVYVGRVTRIIPIGAFVEVFAGKEGMVHISQIADYRVGKVEDELAIGDEVIVKVREIDSKGRVNLTRLNIHPDEAAAARANAMNY</sequence>
<accession>Q115K2</accession>
<gene>
    <name evidence="1" type="primary">pnp</name>
    <name type="ordered locus">Tery_1541</name>
</gene>
<organism>
    <name type="scientific">Trichodesmium erythraeum (strain IMS101)</name>
    <dbReference type="NCBI Taxonomy" id="203124"/>
    <lineage>
        <taxon>Bacteria</taxon>
        <taxon>Bacillati</taxon>
        <taxon>Cyanobacteriota</taxon>
        <taxon>Cyanophyceae</taxon>
        <taxon>Oscillatoriophycideae</taxon>
        <taxon>Oscillatoriales</taxon>
        <taxon>Microcoleaceae</taxon>
        <taxon>Trichodesmium</taxon>
    </lineage>
</organism>
<comment type="function">
    <text evidence="1">Involved in mRNA degradation. Catalyzes the phosphorolysis of single-stranded polyribonucleotides processively in the 3'- to 5'-direction.</text>
</comment>
<comment type="catalytic activity">
    <reaction evidence="1">
        <text>RNA(n+1) + phosphate = RNA(n) + a ribonucleoside 5'-diphosphate</text>
        <dbReference type="Rhea" id="RHEA:22096"/>
        <dbReference type="Rhea" id="RHEA-COMP:14527"/>
        <dbReference type="Rhea" id="RHEA-COMP:17342"/>
        <dbReference type="ChEBI" id="CHEBI:43474"/>
        <dbReference type="ChEBI" id="CHEBI:57930"/>
        <dbReference type="ChEBI" id="CHEBI:140395"/>
        <dbReference type="EC" id="2.7.7.8"/>
    </reaction>
</comment>
<comment type="cofactor">
    <cofactor evidence="1">
        <name>Mg(2+)</name>
        <dbReference type="ChEBI" id="CHEBI:18420"/>
    </cofactor>
</comment>
<comment type="subcellular location">
    <subcellularLocation>
        <location evidence="1">Cytoplasm</location>
    </subcellularLocation>
</comment>
<comment type="similarity">
    <text evidence="1">Belongs to the polyribonucleotide nucleotidyltransferase family.</text>
</comment>